<dbReference type="EC" id="3.4.24.-"/>
<dbReference type="SMR" id="P0C6S1"/>
<dbReference type="GO" id="GO:0005576">
    <property type="term" value="C:extracellular region"/>
    <property type="evidence" value="ECO:0007669"/>
    <property type="project" value="UniProtKB-SubCell"/>
</dbReference>
<dbReference type="GO" id="GO:0046872">
    <property type="term" value="F:metal ion binding"/>
    <property type="evidence" value="ECO:0007669"/>
    <property type="project" value="UniProtKB-KW"/>
</dbReference>
<dbReference type="GO" id="GO:0004222">
    <property type="term" value="F:metalloendopeptidase activity"/>
    <property type="evidence" value="ECO:0007669"/>
    <property type="project" value="InterPro"/>
</dbReference>
<dbReference type="GO" id="GO:0090729">
    <property type="term" value="F:toxin activity"/>
    <property type="evidence" value="ECO:0007669"/>
    <property type="project" value="UniProtKB-KW"/>
</dbReference>
<dbReference type="GO" id="GO:0006915">
    <property type="term" value="P:apoptotic process"/>
    <property type="evidence" value="ECO:0007669"/>
    <property type="project" value="UniProtKB-KW"/>
</dbReference>
<dbReference type="GO" id="GO:0006508">
    <property type="term" value="P:proteolysis"/>
    <property type="evidence" value="ECO:0007669"/>
    <property type="project" value="UniProtKB-KW"/>
</dbReference>
<dbReference type="Gene3D" id="3.40.390.10">
    <property type="entry name" value="Collagenase (Catalytic Domain)"/>
    <property type="match status" value="1"/>
</dbReference>
<dbReference type="InterPro" id="IPR024079">
    <property type="entry name" value="MetalloPept_cat_dom_sf"/>
</dbReference>
<dbReference type="InterPro" id="IPR001590">
    <property type="entry name" value="Peptidase_M12B"/>
</dbReference>
<dbReference type="Pfam" id="PF01421">
    <property type="entry name" value="Reprolysin"/>
    <property type="match status" value="1"/>
</dbReference>
<dbReference type="SUPFAM" id="SSF55486">
    <property type="entry name" value="Metalloproteases ('zincins'), catalytic domain"/>
    <property type="match status" value="1"/>
</dbReference>
<dbReference type="PROSITE" id="PS50215">
    <property type="entry name" value="ADAM_MEPRO"/>
    <property type="match status" value="1"/>
</dbReference>
<comment type="function">
    <text evidence="1">This protein is a zinc protease from snake venom that is devoid of significant myotoxic and hemorrhagic activities. It hydrolyzes the Aalpha-chain and more slowly the Bbeta-chain of fibrin and fibrinogen, without affecting the gamma-chains. It induces cell detachment and a apoptosis (anoikis) in endothelial cells (By similarity).</text>
</comment>
<comment type="cofactor">
    <cofactor evidence="1">
        <name>Zn(2+)</name>
        <dbReference type="ChEBI" id="CHEBI:29105"/>
    </cofactor>
    <text evidence="1">Binds 1 zinc ion per subunit.</text>
</comment>
<comment type="activity regulation">
    <text evidence="1">Inhibited by EDTA.</text>
</comment>
<comment type="subunit">
    <text evidence="3">Monomer.</text>
</comment>
<comment type="subcellular location">
    <subcellularLocation>
        <location>Secreted</location>
    </subcellularLocation>
</comment>
<comment type="tissue specificity">
    <text>Expressed by the venom gland.</text>
</comment>
<comment type="similarity">
    <text evidence="4">Belongs to the venom metalloproteinase (M12B) family. P-I subfamily.</text>
</comment>
<evidence type="ECO:0000250" key="1"/>
<evidence type="ECO:0000255" key="2">
    <source>
        <dbReference type="PROSITE-ProRule" id="PRU00276"/>
    </source>
</evidence>
<evidence type="ECO:0000269" key="3">
    <source>
    </source>
</evidence>
<evidence type="ECO:0000305" key="4"/>
<reference key="1">
    <citation type="journal article" date="2008" name="Toxicon">
        <title>BnP1, a novel P-I metalloproteinase from Bothrops neuwiedi venom: biological effects benchmarking relatively to jararhagin, a P-III SVMP.</title>
        <authorList>
            <person name="Baldo C."/>
            <person name="Tanjoni I."/>
            <person name="Leon I.R."/>
            <person name="Batista I.F.C."/>
            <person name="Della-Casa M.S."/>
            <person name="Clissa P.B."/>
            <person name="Weinlich R."/>
            <person name="Lopes-Ferreira M."/>
            <person name="Lebrun I."/>
            <person name="Amarante-Mendes G.P."/>
            <person name="Rodrigues V.M."/>
            <person name="Perales J."/>
            <person name="Valente R.H."/>
            <person name="Moura-da-Silva A.M."/>
        </authorList>
    </citation>
    <scope>PROTEIN SEQUENCE</scope>
    <scope>IDENTIFICATION BY MASS SPECTROMETRY</scope>
    <scope>SUBUNIT</scope>
    <source>
        <tissue>Venom</tissue>
    </source>
</reference>
<feature type="chain" id="PRO_0000326272" description="Snake venom metalloproteinase BnP2">
    <location>
        <begin position="1" status="less than"/>
        <end position="69" status="greater than"/>
    </location>
</feature>
<feature type="domain" description="Peptidase M12B" evidence="2">
    <location>
        <begin position="1" status="less than"/>
        <end position="69" status="greater than"/>
    </location>
</feature>
<feature type="binding site" evidence="1">
    <location>
        <position position="3"/>
    </location>
    <ligand>
        <name>Ca(2+)</name>
        <dbReference type="ChEBI" id="CHEBI:29108"/>
        <label>1</label>
    </ligand>
</feature>
<feature type="unsure residue" description="I or L">
    <location>
        <position position="20"/>
    </location>
</feature>
<feature type="unsure residue" description="I or L">
    <location>
        <position position="23"/>
    </location>
</feature>
<feature type="unsure residue" description="I or L">
    <location>
        <position position="45"/>
    </location>
</feature>
<feature type="unsure residue" description="I or L">
    <location>
        <position position="48"/>
    </location>
</feature>
<feature type="unsure residue" description="I or L">
    <location>
        <position position="55"/>
    </location>
</feature>
<feature type="unsure residue" description="I or L">
    <location>
        <position position="66"/>
    </location>
</feature>
<feature type="unsure residue" description="I or L">
    <location>
        <position position="67"/>
    </location>
</feature>
<feature type="non-consecutive residues" evidence="4">
    <location>
        <begin position="24"/>
        <end position="25"/>
    </location>
</feature>
<feature type="non-consecutive residues" evidence="4">
    <location>
        <begin position="53"/>
        <end position="54"/>
    </location>
</feature>
<feature type="non-terminal residue">
    <location>
        <position position="1"/>
    </location>
</feature>
<feature type="non-terminal residue">
    <location>
        <position position="69"/>
    </location>
</feature>
<accession>P0C6S1</accession>
<keyword id="KW-0053">Apoptosis</keyword>
<keyword id="KW-0903">Direct protein sequencing</keyword>
<keyword id="KW-1206">Fibrinogenolytic toxin</keyword>
<keyword id="KW-1205">Fibrinolytic toxin</keyword>
<keyword id="KW-1199">Hemostasis impairing toxin</keyword>
<keyword id="KW-0378">Hydrolase</keyword>
<keyword id="KW-0479">Metal-binding</keyword>
<keyword id="KW-0482">Metalloprotease</keyword>
<keyword id="KW-0645">Protease</keyword>
<keyword id="KW-0964">Secreted</keyword>
<keyword id="KW-0800">Toxin</keyword>
<keyword id="KW-0862">Zinc</keyword>
<protein>
    <recommendedName>
        <fullName>Snake venom metalloproteinase BnP2</fullName>
        <shortName>SVMP</shortName>
        <ecNumber>3.4.24.-</ecNumber>
    </recommendedName>
</protein>
<proteinExistence type="evidence at protein level"/>
<name>VM1B2_BOTPA</name>
<sequence length="69" mass="8008">YIELAVVADHGMFTKYNSNIDTIRVHEMVNTVDGFFRSMNVDASIANIEVWSKTITSFGEWRERDIIPR</sequence>
<organism>
    <name type="scientific">Bothrops pauloensis</name>
    <name type="common">Neuwied's lancehead</name>
    <name type="synonym">Bothrops neuwiedi pauloensis</name>
    <dbReference type="NCBI Taxonomy" id="1042543"/>
    <lineage>
        <taxon>Eukaryota</taxon>
        <taxon>Metazoa</taxon>
        <taxon>Chordata</taxon>
        <taxon>Craniata</taxon>
        <taxon>Vertebrata</taxon>
        <taxon>Euteleostomi</taxon>
        <taxon>Lepidosauria</taxon>
        <taxon>Squamata</taxon>
        <taxon>Bifurcata</taxon>
        <taxon>Unidentata</taxon>
        <taxon>Episquamata</taxon>
        <taxon>Toxicofera</taxon>
        <taxon>Serpentes</taxon>
        <taxon>Colubroidea</taxon>
        <taxon>Viperidae</taxon>
        <taxon>Crotalinae</taxon>
        <taxon>Bothrops</taxon>
    </lineage>
</organism>